<evidence type="ECO:0000255" key="1">
    <source>
        <dbReference type="HAMAP-Rule" id="MF_01597"/>
    </source>
</evidence>
<sequence length="109" mass="11720">MAQFEWVHAAWLALAIVLEIVANVFLKFSDGFRRKIFGLLSLAAVLAAFSALSQAVKGIDLSVAYALWGGFGIAATLAAGWILFGQRLNRKGWIGLVLLLAGMIMVKLA</sequence>
<gene>
    <name evidence="1" type="primary">mdtI</name>
    <name type="ordered locus">EcolC_2031</name>
</gene>
<reference key="1">
    <citation type="submission" date="2008-02" db="EMBL/GenBank/DDBJ databases">
        <title>Complete sequence of Escherichia coli C str. ATCC 8739.</title>
        <authorList>
            <person name="Copeland A."/>
            <person name="Lucas S."/>
            <person name="Lapidus A."/>
            <person name="Glavina del Rio T."/>
            <person name="Dalin E."/>
            <person name="Tice H."/>
            <person name="Bruce D."/>
            <person name="Goodwin L."/>
            <person name="Pitluck S."/>
            <person name="Kiss H."/>
            <person name="Brettin T."/>
            <person name="Detter J.C."/>
            <person name="Han C."/>
            <person name="Kuske C.R."/>
            <person name="Schmutz J."/>
            <person name="Larimer F."/>
            <person name="Land M."/>
            <person name="Hauser L."/>
            <person name="Kyrpides N."/>
            <person name="Mikhailova N."/>
            <person name="Ingram L."/>
            <person name="Richardson P."/>
        </authorList>
    </citation>
    <scope>NUCLEOTIDE SEQUENCE [LARGE SCALE GENOMIC DNA]</scope>
    <source>
        <strain>ATCC 8739 / DSM 1576 / NBRC 3972 / NCIMB 8545 / WDCM 00012 / Crooks</strain>
    </source>
</reference>
<accession>B1IQZ1</accession>
<protein>
    <recommendedName>
        <fullName evidence="1">Spermidine export protein MdtI</fullName>
    </recommendedName>
</protein>
<proteinExistence type="inferred from homology"/>
<name>MDTI_ECOLC</name>
<keyword id="KW-0997">Cell inner membrane</keyword>
<keyword id="KW-1003">Cell membrane</keyword>
<keyword id="KW-0472">Membrane</keyword>
<keyword id="KW-0812">Transmembrane</keyword>
<keyword id="KW-1133">Transmembrane helix</keyword>
<keyword id="KW-0813">Transport</keyword>
<comment type="function">
    <text evidence="1">Catalyzes the excretion of spermidine.</text>
</comment>
<comment type="subunit">
    <text evidence="1">Forms a complex with MdtJ.</text>
</comment>
<comment type="subcellular location">
    <subcellularLocation>
        <location evidence="1">Cell inner membrane</location>
        <topology evidence="1">Multi-pass membrane protein</topology>
    </subcellularLocation>
</comment>
<comment type="similarity">
    <text evidence="1">Belongs to the drug/metabolite transporter (DMT) superfamily. Small multidrug resistance (SMR) (TC 2.A.7.1) family. MdtI subfamily.</text>
</comment>
<feature type="chain" id="PRO_1000088003" description="Spermidine export protein MdtI">
    <location>
        <begin position="1"/>
        <end position="109"/>
    </location>
</feature>
<feature type="transmembrane region" description="Helical" evidence="1">
    <location>
        <begin position="6"/>
        <end position="26"/>
    </location>
</feature>
<feature type="transmembrane region" description="Helical" evidence="1">
    <location>
        <begin position="36"/>
        <end position="56"/>
    </location>
</feature>
<feature type="transmembrane region" description="Helical" evidence="1">
    <location>
        <begin position="64"/>
        <end position="84"/>
    </location>
</feature>
<feature type="transmembrane region" description="Helical" evidence="1">
    <location>
        <begin position="88"/>
        <end position="108"/>
    </location>
</feature>
<organism>
    <name type="scientific">Escherichia coli (strain ATCC 8739 / DSM 1576 / NBRC 3972 / NCIMB 8545 / WDCM 00012 / Crooks)</name>
    <dbReference type="NCBI Taxonomy" id="481805"/>
    <lineage>
        <taxon>Bacteria</taxon>
        <taxon>Pseudomonadati</taxon>
        <taxon>Pseudomonadota</taxon>
        <taxon>Gammaproteobacteria</taxon>
        <taxon>Enterobacterales</taxon>
        <taxon>Enterobacteriaceae</taxon>
        <taxon>Escherichia</taxon>
    </lineage>
</organism>
<dbReference type="EMBL" id="CP000946">
    <property type="protein sequence ID" value="ACA77675.1"/>
    <property type="molecule type" value="Genomic_DNA"/>
</dbReference>
<dbReference type="RefSeq" id="WP_000046661.1">
    <property type="nucleotide sequence ID" value="NZ_MTFT01000006.1"/>
</dbReference>
<dbReference type="SMR" id="B1IQZ1"/>
<dbReference type="GeneID" id="93775747"/>
<dbReference type="KEGG" id="ecl:EcolC_2031"/>
<dbReference type="HOGENOM" id="CLU_133067_0_4_6"/>
<dbReference type="GO" id="GO:0005886">
    <property type="term" value="C:plasma membrane"/>
    <property type="evidence" value="ECO:0007669"/>
    <property type="project" value="UniProtKB-SubCell"/>
</dbReference>
<dbReference type="GO" id="GO:0015199">
    <property type="term" value="F:amino-acid betaine transmembrane transporter activity"/>
    <property type="evidence" value="ECO:0007669"/>
    <property type="project" value="TreeGrafter"/>
</dbReference>
<dbReference type="GO" id="GO:0015297">
    <property type="term" value="F:antiporter activity"/>
    <property type="evidence" value="ECO:0007669"/>
    <property type="project" value="TreeGrafter"/>
</dbReference>
<dbReference type="GO" id="GO:0015220">
    <property type="term" value="F:choline transmembrane transporter activity"/>
    <property type="evidence" value="ECO:0007669"/>
    <property type="project" value="TreeGrafter"/>
</dbReference>
<dbReference type="GO" id="GO:0015606">
    <property type="term" value="F:spermidine transmembrane transporter activity"/>
    <property type="evidence" value="ECO:0007669"/>
    <property type="project" value="UniProtKB-UniRule"/>
</dbReference>
<dbReference type="GO" id="GO:0031460">
    <property type="term" value="P:glycine betaine transport"/>
    <property type="evidence" value="ECO:0007669"/>
    <property type="project" value="TreeGrafter"/>
</dbReference>
<dbReference type="FunFam" id="1.10.3730.20:FF:000001">
    <property type="entry name" value="Quaternary ammonium compound resistance transporter SugE"/>
    <property type="match status" value="1"/>
</dbReference>
<dbReference type="Gene3D" id="1.10.3730.20">
    <property type="match status" value="1"/>
</dbReference>
<dbReference type="HAMAP" id="MF_01597">
    <property type="entry name" value="MdtI"/>
    <property type="match status" value="1"/>
</dbReference>
<dbReference type="InterPro" id="IPR000390">
    <property type="entry name" value="Small_drug/metabolite_transptr"/>
</dbReference>
<dbReference type="InterPro" id="IPR045324">
    <property type="entry name" value="Small_multidrug_res"/>
</dbReference>
<dbReference type="InterPro" id="IPR023737">
    <property type="entry name" value="Spermidine_export_MdtI"/>
</dbReference>
<dbReference type="NCBIfam" id="NF007934">
    <property type="entry name" value="PRK10650.1"/>
    <property type="match status" value="1"/>
</dbReference>
<dbReference type="PANTHER" id="PTHR30561">
    <property type="entry name" value="SMR FAMILY PROTON-DEPENDENT DRUG EFFLUX TRANSPORTER SUGE"/>
    <property type="match status" value="1"/>
</dbReference>
<dbReference type="PANTHER" id="PTHR30561:SF6">
    <property type="entry name" value="SPERMIDINE EXPORT PROTEIN MDTI"/>
    <property type="match status" value="1"/>
</dbReference>
<dbReference type="Pfam" id="PF00893">
    <property type="entry name" value="Multi_Drug_Res"/>
    <property type="match status" value="1"/>
</dbReference>
<dbReference type="SUPFAM" id="SSF103481">
    <property type="entry name" value="Multidrug resistance efflux transporter EmrE"/>
    <property type="match status" value="1"/>
</dbReference>